<evidence type="ECO:0000250" key="1">
    <source>
        <dbReference type="UniProtKB" id="Q9C801"/>
    </source>
</evidence>
<evidence type="ECO:0000255" key="2">
    <source>
        <dbReference type="PROSITE-ProRule" id="PRU00092"/>
    </source>
</evidence>
<evidence type="ECO:0000256" key="3">
    <source>
        <dbReference type="SAM" id="MobiDB-lite"/>
    </source>
</evidence>
<evidence type="ECO:0000303" key="4">
    <source>
    </source>
</evidence>
<evidence type="ECO:0000305" key="5"/>
<evidence type="ECO:0000312" key="6">
    <source>
        <dbReference type="WormBase" id="R11A8.2"/>
    </source>
</evidence>
<name>GPKOW_CAEEL</name>
<keyword id="KW-0539">Nucleus</keyword>
<keyword id="KW-1185">Reference proteome</keyword>
<keyword id="KW-0677">Repeat</keyword>
<feature type="chain" id="PRO_0000280566" description="G-patch domain and KOW motifs-containing protein homolog 1">
    <location>
        <begin position="1"/>
        <end position="462"/>
    </location>
</feature>
<feature type="domain" description="G-patch" evidence="2">
    <location>
        <begin position="154"/>
        <end position="202"/>
    </location>
</feature>
<feature type="domain" description="KOW 1">
    <location>
        <begin position="221"/>
        <end position="248"/>
    </location>
</feature>
<feature type="domain" description="KOW 2">
    <location>
        <begin position="401"/>
        <end position="428"/>
    </location>
</feature>
<feature type="region of interest" description="Disordered" evidence="3">
    <location>
        <begin position="1"/>
        <end position="26"/>
    </location>
</feature>
<feature type="region of interest" description="Disordered" evidence="3">
    <location>
        <begin position="182"/>
        <end position="218"/>
    </location>
</feature>
<feature type="region of interest" description="Disordered" evidence="3">
    <location>
        <begin position="289"/>
        <end position="337"/>
    </location>
</feature>
<feature type="compositionally biased region" description="Basic and acidic residues" evidence="3">
    <location>
        <begin position="289"/>
        <end position="305"/>
    </location>
</feature>
<feature type="compositionally biased region" description="Low complexity" evidence="3">
    <location>
        <begin position="306"/>
        <end position="317"/>
    </location>
</feature>
<feature type="compositionally biased region" description="Basic and acidic residues" evidence="3">
    <location>
        <begin position="318"/>
        <end position="337"/>
    </location>
</feature>
<protein>
    <recommendedName>
        <fullName evidence="6">G-patch domain and KOW motifs-containing protein homolog 1</fullName>
    </recommendedName>
    <alternativeName>
        <fullName evidence="1">Protein mos-2 homolog</fullName>
    </alternativeName>
</protein>
<accession>Q21924</accession>
<sequence length="462" mass="51712">MVEQTTSEPAAGSMPKISFGVKKREENKVQAPAKAVVIEVDLDSDEEREKNEMERAAKRRKVMHFEDGTVQGDIDKPKEAAVIPMVVEHDWRTQKLIEKEKAGTLTEEERAKLALVLPNGIDGENEEESGKGEKIVVEDGRGDTEDADYSAIPIESFGLAILRGCNWKDGDGIGKNPQKVALKLPNRRPPGLGLGATPKNPVGKNKNTGESSKAEEEKLEEIKVGSFIKVVDGRNKGVYGKVEGRDDDSNSLFIRTAIGGKTMKVSQIVAVAVSAKEYERDSKCLNKSEYDKEKDRLETERKKLESQPPSTSTSQSSKDYKSKSSSSKHDKNSSEYERNDKMWARTDLLVRFIDEDFKRGSLYEQKVRIVDVAGDNDVTIEDDRGNTHYNIRQSWLETVIPREIGEKLMIVAGKRSGQLAVMLDKDKRKEKVTARLVATNDVVTAYFEDVCSVKIRHEEDYE</sequence>
<comment type="interaction">
    <interactant intactId="EBI-326087">
        <id>Q21924</id>
    </interactant>
    <interactant intactId="EBI-320525">
        <id>Q22387</id>
        <label>CELE_T11B7.1</label>
    </interactant>
    <organismsDiffer>false</organismsDiffer>
    <experiments>3</experiments>
</comment>
<comment type="subcellular location">
    <subcellularLocation>
        <location evidence="1">Nucleus</location>
    </subcellularLocation>
</comment>
<comment type="similarity">
    <text evidence="5">Belongs to the MOS2 family.</text>
</comment>
<reference key="1">
    <citation type="journal article" date="1998" name="Science">
        <title>Genome sequence of the nematode C. elegans: a platform for investigating biology.</title>
        <authorList>
            <consortium name="The C. elegans sequencing consortium"/>
        </authorList>
    </citation>
    <scope>NUCLEOTIDE SEQUENCE [LARGE SCALE GENOMIC DNA]</scope>
    <source>
        <strain>Bristol N2</strain>
    </source>
</reference>
<reference key="2">
    <citation type="journal article" date="2005" name="Curr. Biol.">
        <title>MOS2, a protein containing G-patch and KOW motifs, is essential for innate immunity in Arabidopsis thaliana.</title>
        <authorList>
            <person name="Zhang Y."/>
            <person name="Cheng Y.T."/>
            <person name="Bi D."/>
            <person name="Palma K."/>
            <person name="Li X."/>
        </authorList>
    </citation>
    <scope>IDENTIFICATION</scope>
</reference>
<organism>
    <name type="scientific">Caenorhabditis elegans</name>
    <dbReference type="NCBI Taxonomy" id="6239"/>
    <lineage>
        <taxon>Eukaryota</taxon>
        <taxon>Metazoa</taxon>
        <taxon>Ecdysozoa</taxon>
        <taxon>Nematoda</taxon>
        <taxon>Chromadorea</taxon>
        <taxon>Rhabditida</taxon>
        <taxon>Rhabditina</taxon>
        <taxon>Rhabditomorpha</taxon>
        <taxon>Rhabditoidea</taxon>
        <taxon>Rhabditidae</taxon>
        <taxon>Peloderinae</taxon>
        <taxon>Caenorhabditis</taxon>
    </lineage>
</organism>
<gene>
    <name evidence="6" type="primary">gkow-1</name>
    <name evidence="4" type="synonym">mos-2</name>
    <name evidence="6" type="ORF">R11A8.2</name>
</gene>
<dbReference type="EMBL" id="Z70310">
    <property type="protein sequence ID" value="CAA94367.1"/>
    <property type="molecule type" value="Genomic_DNA"/>
</dbReference>
<dbReference type="PIR" id="T24174">
    <property type="entry name" value="T24174"/>
</dbReference>
<dbReference type="RefSeq" id="NP_501910.1">
    <property type="nucleotide sequence ID" value="NM_069509.3"/>
</dbReference>
<dbReference type="SMR" id="Q21924"/>
<dbReference type="BioGRID" id="43025">
    <property type="interactions" value="4"/>
</dbReference>
<dbReference type="DIP" id="DIP-25314N"/>
<dbReference type="FunCoup" id="Q21924">
    <property type="interactions" value="2402"/>
</dbReference>
<dbReference type="IntAct" id="Q21924">
    <property type="interactions" value="2"/>
</dbReference>
<dbReference type="STRING" id="6239.R11A8.2.1"/>
<dbReference type="PaxDb" id="6239-R11A8.2"/>
<dbReference type="PeptideAtlas" id="Q21924"/>
<dbReference type="EnsemblMetazoa" id="R11A8.2.1">
    <property type="protein sequence ID" value="R11A8.2.1"/>
    <property type="gene ID" value="WBGene00011237"/>
</dbReference>
<dbReference type="GeneID" id="177923"/>
<dbReference type="KEGG" id="cel:CELE_R11A8.2"/>
<dbReference type="UCSC" id="R11A8.2">
    <property type="organism name" value="c. elegans"/>
</dbReference>
<dbReference type="AGR" id="WB:WBGene00011237"/>
<dbReference type="CTD" id="177923"/>
<dbReference type="WormBase" id="R11A8.2">
    <property type="protein sequence ID" value="CE06300"/>
    <property type="gene ID" value="WBGene00011237"/>
    <property type="gene designation" value="gkow-1"/>
</dbReference>
<dbReference type="eggNOG" id="KOG4315">
    <property type="taxonomic scope" value="Eukaryota"/>
</dbReference>
<dbReference type="GeneTree" id="ENSGT00390000015154"/>
<dbReference type="HOGENOM" id="CLU_496301_0_0_1"/>
<dbReference type="InParanoid" id="Q21924"/>
<dbReference type="OMA" id="TCDIIMD"/>
<dbReference type="OrthoDB" id="5577072at2759"/>
<dbReference type="PhylomeDB" id="Q21924"/>
<dbReference type="PRO" id="PR:Q21924"/>
<dbReference type="Proteomes" id="UP000001940">
    <property type="component" value="Chromosome IV"/>
</dbReference>
<dbReference type="Bgee" id="WBGene00011237">
    <property type="expression patterns" value="Expressed in germ line (C elegans) and 4 other cell types or tissues"/>
</dbReference>
<dbReference type="GO" id="GO:0005681">
    <property type="term" value="C:spliceosomal complex"/>
    <property type="evidence" value="ECO:0000318"/>
    <property type="project" value="GO_Central"/>
</dbReference>
<dbReference type="GO" id="GO:0003676">
    <property type="term" value="F:nucleic acid binding"/>
    <property type="evidence" value="ECO:0007669"/>
    <property type="project" value="InterPro"/>
</dbReference>
<dbReference type="GO" id="GO:0000398">
    <property type="term" value="P:mRNA splicing, via spliceosome"/>
    <property type="evidence" value="ECO:0000318"/>
    <property type="project" value="GO_Central"/>
</dbReference>
<dbReference type="CDD" id="cd13153">
    <property type="entry name" value="KOW_GPKOW_B"/>
    <property type="match status" value="1"/>
</dbReference>
<dbReference type="InterPro" id="IPR000467">
    <property type="entry name" value="G_patch_dom"/>
</dbReference>
<dbReference type="InterPro" id="IPR041994">
    <property type="entry name" value="GPKOW_KOW2"/>
</dbReference>
<dbReference type="InterPro" id="IPR005824">
    <property type="entry name" value="KOW"/>
</dbReference>
<dbReference type="InterPro" id="IPR045166">
    <property type="entry name" value="Spp2-like"/>
</dbReference>
<dbReference type="InterPro" id="IPR026822">
    <property type="entry name" value="Spp2/MOS2_G-patch"/>
</dbReference>
<dbReference type="PANTHER" id="PTHR15818">
    <property type="entry name" value="G PATCH AND KOW-CONTAINING"/>
    <property type="match status" value="1"/>
</dbReference>
<dbReference type="PANTHER" id="PTHR15818:SF2">
    <property type="entry name" value="G-PATCH DOMAIN AND KOW MOTIFS-CONTAINING PROTEIN"/>
    <property type="match status" value="1"/>
</dbReference>
<dbReference type="Pfam" id="PF12656">
    <property type="entry name" value="G-patch_2"/>
    <property type="match status" value="1"/>
</dbReference>
<dbReference type="Pfam" id="PF25088">
    <property type="entry name" value="GPKOW_C"/>
    <property type="match status" value="1"/>
</dbReference>
<dbReference type="SMART" id="SM00443">
    <property type="entry name" value="G_patch"/>
    <property type="match status" value="1"/>
</dbReference>
<dbReference type="SMART" id="SM00739">
    <property type="entry name" value="KOW"/>
    <property type="match status" value="2"/>
</dbReference>
<dbReference type="PROSITE" id="PS50174">
    <property type="entry name" value="G_PATCH"/>
    <property type="match status" value="1"/>
</dbReference>
<proteinExistence type="evidence at protein level"/>